<organism>
    <name type="scientific">Yersinia enterocolitica serotype O:8 / biotype 1B (strain NCTC 13174 / 8081)</name>
    <dbReference type="NCBI Taxonomy" id="393305"/>
    <lineage>
        <taxon>Bacteria</taxon>
        <taxon>Pseudomonadati</taxon>
        <taxon>Pseudomonadota</taxon>
        <taxon>Gammaproteobacteria</taxon>
        <taxon>Enterobacterales</taxon>
        <taxon>Yersiniaceae</taxon>
        <taxon>Yersinia</taxon>
    </lineage>
</organism>
<name>EPMA_YERE8</name>
<proteinExistence type="inferred from homology"/>
<dbReference type="EC" id="6.3.2.-" evidence="1"/>
<dbReference type="EMBL" id="AM286415">
    <property type="protein sequence ID" value="CAL10495.1"/>
    <property type="molecule type" value="Genomic_DNA"/>
</dbReference>
<dbReference type="RefSeq" id="WP_005175550.1">
    <property type="nucleotide sequence ID" value="NC_008800.1"/>
</dbReference>
<dbReference type="RefSeq" id="YP_001004741.1">
    <property type="nucleotide sequence ID" value="NC_008800.1"/>
</dbReference>
<dbReference type="SMR" id="A1JIQ4"/>
<dbReference type="KEGG" id="yen:YE0365"/>
<dbReference type="PATRIC" id="fig|393305.7.peg.462"/>
<dbReference type="eggNOG" id="COG2269">
    <property type="taxonomic scope" value="Bacteria"/>
</dbReference>
<dbReference type="HOGENOM" id="CLU_008255_1_1_6"/>
<dbReference type="OrthoDB" id="9802326at2"/>
<dbReference type="Proteomes" id="UP000000642">
    <property type="component" value="Chromosome"/>
</dbReference>
<dbReference type="GO" id="GO:0005829">
    <property type="term" value="C:cytosol"/>
    <property type="evidence" value="ECO:0007669"/>
    <property type="project" value="TreeGrafter"/>
</dbReference>
<dbReference type="GO" id="GO:0016880">
    <property type="term" value="F:acid-ammonia (or amide) ligase activity"/>
    <property type="evidence" value="ECO:0007669"/>
    <property type="project" value="UniProtKB-UniRule"/>
</dbReference>
<dbReference type="GO" id="GO:0005524">
    <property type="term" value="F:ATP binding"/>
    <property type="evidence" value="ECO:0007669"/>
    <property type="project" value="UniProtKB-UniRule"/>
</dbReference>
<dbReference type="GO" id="GO:0004824">
    <property type="term" value="F:lysine-tRNA ligase activity"/>
    <property type="evidence" value="ECO:0007669"/>
    <property type="project" value="InterPro"/>
</dbReference>
<dbReference type="GO" id="GO:0000049">
    <property type="term" value="F:tRNA binding"/>
    <property type="evidence" value="ECO:0007669"/>
    <property type="project" value="TreeGrafter"/>
</dbReference>
<dbReference type="GO" id="GO:0006430">
    <property type="term" value="P:lysyl-tRNA aminoacylation"/>
    <property type="evidence" value="ECO:0007669"/>
    <property type="project" value="InterPro"/>
</dbReference>
<dbReference type="FunFam" id="3.30.930.10:FF:000017">
    <property type="entry name" value="Elongation factor P--(R)-beta-lysine ligase"/>
    <property type="match status" value="1"/>
</dbReference>
<dbReference type="Gene3D" id="3.30.930.10">
    <property type="entry name" value="Bira Bifunctional Protein, Domain 2"/>
    <property type="match status" value="1"/>
</dbReference>
<dbReference type="HAMAP" id="MF_00174">
    <property type="entry name" value="EF_P_modif_A"/>
    <property type="match status" value="1"/>
</dbReference>
<dbReference type="InterPro" id="IPR004364">
    <property type="entry name" value="Aa-tRNA-synt_II"/>
</dbReference>
<dbReference type="InterPro" id="IPR006195">
    <property type="entry name" value="aa-tRNA-synth_II"/>
</dbReference>
<dbReference type="InterPro" id="IPR045864">
    <property type="entry name" value="aa-tRNA-synth_II/BPL/LPL"/>
</dbReference>
<dbReference type="InterPro" id="IPR004525">
    <property type="entry name" value="EpmA"/>
</dbReference>
<dbReference type="InterPro" id="IPR018149">
    <property type="entry name" value="Lys-tRNA-synth_II_C"/>
</dbReference>
<dbReference type="NCBIfam" id="TIGR00462">
    <property type="entry name" value="genX"/>
    <property type="match status" value="1"/>
</dbReference>
<dbReference type="NCBIfam" id="NF006828">
    <property type="entry name" value="PRK09350.1"/>
    <property type="match status" value="1"/>
</dbReference>
<dbReference type="PANTHER" id="PTHR42918:SF6">
    <property type="entry name" value="ELONGATION FACTOR P--(R)-BETA-LYSINE LIGASE"/>
    <property type="match status" value="1"/>
</dbReference>
<dbReference type="PANTHER" id="PTHR42918">
    <property type="entry name" value="LYSYL-TRNA SYNTHETASE"/>
    <property type="match status" value="1"/>
</dbReference>
<dbReference type="Pfam" id="PF00152">
    <property type="entry name" value="tRNA-synt_2"/>
    <property type="match status" value="1"/>
</dbReference>
<dbReference type="PRINTS" id="PR00982">
    <property type="entry name" value="TRNASYNTHLYS"/>
</dbReference>
<dbReference type="SUPFAM" id="SSF55681">
    <property type="entry name" value="Class II aaRS and biotin synthetases"/>
    <property type="match status" value="1"/>
</dbReference>
<dbReference type="PROSITE" id="PS50862">
    <property type="entry name" value="AA_TRNA_LIGASE_II"/>
    <property type="match status" value="1"/>
</dbReference>
<sequence length="325" mass="36642">MSETASWQPSAPIANLLKRAAIMAEIRRFFADRGVLEVETPTMSQATVTDIHLVPFQTRFVGPGAADGLTLYMMTSPEYHMKRLLAAGSGSIYQLGRSFRNEEAGRHHNPEFTMLEWYRPHYDMYRLMDEVEDLLQQILDCDSSERLSYQQAFLRHLDIDPLSADKAQLREAAAKLDLSNIADTEEDRDTLLQLLFTVGVEPHIGRDKPAFVYHFPASQASLAVISTEDHRVAERFEVYFKGIELANGFHELTDGDEQLKRFEQDNRSREKRGLPQHPIDMNLIDALKHGLPDCSGVALGVDRLVMLALGAEKLSDVIAFPVGRA</sequence>
<feature type="chain" id="PRO_1000023634" description="Elongation factor P--(R)-beta-lysine ligase">
    <location>
        <begin position="1"/>
        <end position="325"/>
    </location>
</feature>
<feature type="binding site" evidence="1">
    <location>
        <begin position="76"/>
        <end position="78"/>
    </location>
    <ligand>
        <name>substrate</name>
    </ligand>
</feature>
<feature type="binding site" evidence="1">
    <location>
        <begin position="100"/>
        <end position="102"/>
    </location>
    <ligand>
        <name>ATP</name>
        <dbReference type="ChEBI" id="CHEBI:30616"/>
    </ligand>
</feature>
<feature type="binding site" evidence="1">
    <location>
        <position position="109"/>
    </location>
    <ligand>
        <name>ATP</name>
        <dbReference type="ChEBI" id="CHEBI:30616"/>
    </ligand>
</feature>
<feature type="binding site" evidence="1">
    <location>
        <position position="118"/>
    </location>
    <ligand>
        <name>substrate</name>
    </ligand>
</feature>
<feature type="binding site" evidence="1">
    <location>
        <begin position="244"/>
        <end position="245"/>
    </location>
    <ligand>
        <name>ATP</name>
        <dbReference type="ChEBI" id="CHEBI:30616"/>
    </ligand>
</feature>
<feature type="binding site" evidence="1">
    <location>
        <position position="251"/>
    </location>
    <ligand>
        <name>substrate</name>
    </ligand>
</feature>
<feature type="binding site" evidence="1">
    <location>
        <position position="300"/>
    </location>
    <ligand>
        <name>ATP</name>
        <dbReference type="ChEBI" id="CHEBI:30616"/>
    </ligand>
</feature>
<comment type="function">
    <text evidence="1">With EpmB is involved in the beta-lysylation step of the post-translational modification of translation elongation factor P (EF-P). Catalyzes the ATP-dependent activation of (R)-beta-lysine produced by EpmB, forming a lysyl-adenylate, from which the beta-lysyl moiety is then transferred to the epsilon-amino group of a conserved specific lysine residue in EF-P.</text>
</comment>
<comment type="catalytic activity">
    <reaction evidence="1">
        <text>D-beta-lysine + L-lysyl-[protein] + ATP = N(6)-((3R)-3,6-diaminohexanoyl)-L-lysyl-[protein] + AMP + diphosphate + H(+)</text>
        <dbReference type="Rhea" id="RHEA:83435"/>
        <dbReference type="Rhea" id="RHEA-COMP:9752"/>
        <dbReference type="Rhea" id="RHEA-COMP:20131"/>
        <dbReference type="ChEBI" id="CHEBI:15378"/>
        <dbReference type="ChEBI" id="CHEBI:29969"/>
        <dbReference type="ChEBI" id="CHEBI:30616"/>
        <dbReference type="ChEBI" id="CHEBI:33019"/>
        <dbReference type="ChEBI" id="CHEBI:84138"/>
        <dbReference type="ChEBI" id="CHEBI:156053"/>
        <dbReference type="ChEBI" id="CHEBI:456215"/>
    </reaction>
    <physiologicalReaction direction="left-to-right" evidence="1">
        <dbReference type="Rhea" id="RHEA:83436"/>
    </physiologicalReaction>
</comment>
<comment type="subunit">
    <text evidence="1">Homodimer.</text>
</comment>
<comment type="similarity">
    <text evidence="1">Belongs to the class-II aminoacyl-tRNA synthetase family. EpmA subfamily.</text>
</comment>
<evidence type="ECO:0000255" key="1">
    <source>
        <dbReference type="HAMAP-Rule" id="MF_00174"/>
    </source>
</evidence>
<protein>
    <recommendedName>
        <fullName evidence="1">Elongation factor P--(R)-beta-lysine ligase</fullName>
        <shortName evidence="1">EF-P--(R)-beta-lysine ligase</shortName>
        <ecNumber evidence="1">6.3.2.-</ecNumber>
    </recommendedName>
    <alternativeName>
        <fullName evidence="1">EF-P post-translational modification enzyme A</fullName>
    </alternativeName>
    <alternativeName>
        <fullName evidence="1">EF-P-lysine lysyltransferase</fullName>
    </alternativeName>
</protein>
<gene>
    <name evidence="1" type="primary">epmA</name>
    <name type="synonym">yjeA</name>
    <name type="ordered locus">YE0365</name>
</gene>
<reference key="1">
    <citation type="journal article" date="2006" name="PLoS Genet.">
        <title>The complete genome sequence and comparative genome analysis of the high pathogenicity Yersinia enterocolitica strain 8081.</title>
        <authorList>
            <person name="Thomson N.R."/>
            <person name="Howard S."/>
            <person name="Wren B.W."/>
            <person name="Holden M.T.G."/>
            <person name="Crossman L."/>
            <person name="Challis G.L."/>
            <person name="Churcher C."/>
            <person name="Mungall K."/>
            <person name="Brooks K."/>
            <person name="Chillingworth T."/>
            <person name="Feltwell T."/>
            <person name="Abdellah Z."/>
            <person name="Hauser H."/>
            <person name="Jagels K."/>
            <person name="Maddison M."/>
            <person name="Moule S."/>
            <person name="Sanders M."/>
            <person name="Whitehead S."/>
            <person name="Quail M.A."/>
            <person name="Dougan G."/>
            <person name="Parkhill J."/>
            <person name="Prentice M.B."/>
        </authorList>
    </citation>
    <scope>NUCLEOTIDE SEQUENCE [LARGE SCALE GENOMIC DNA]</scope>
    <source>
        <strain>NCTC 13174 / 8081</strain>
    </source>
</reference>
<accession>A1JIQ4</accession>
<keyword id="KW-0067">ATP-binding</keyword>
<keyword id="KW-0436">Ligase</keyword>
<keyword id="KW-0547">Nucleotide-binding</keyword>